<proteinExistence type="inferred from homology"/>
<feature type="chain" id="PRO_0000088245" description="3-phosphoshikimate 1-carboxyvinyltransferase">
    <location>
        <begin position="1"/>
        <end position="434"/>
    </location>
</feature>
<feature type="active site" description="Proton acceptor" evidence="1">
    <location>
        <position position="319"/>
    </location>
</feature>
<feature type="binding site" evidence="1">
    <location>
        <position position="15"/>
    </location>
    <ligand>
        <name>3-phosphoshikimate</name>
        <dbReference type="ChEBI" id="CHEBI:145989"/>
    </ligand>
</feature>
<feature type="binding site" evidence="1">
    <location>
        <position position="15"/>
    </location>
    <ligand>
        <name>phosphoenolpyruvate</name>
        <dbReference type="ChEBI" id="CHEBI:58702"/>
    </ligand>
</feature>
<feature type="binding site" evidence="1">
    <location>
        <position position="16"/>
    </location>
    <ligand>
        <name>3-phosphoshikimate</name>
        <dbReference type="ChEBI" id="CHEBI:145989"/>
    </ligand>
</feature>
<feature type="binding site" evidence="1">
    <location>
        <position position="20"/>
    </location>
    <ligand>
        <name>3-phosphoshikimate</name>
        <dbReference type="ChEBI" id="CHEBI:145989"/>
    </ligand>
</feature>
<feature type="binding site" evidence="1">
    <location>
        <position position="96"/>
    </location>
    <ligand>
        <name>phosphoenolpyruvate</name>
        <dbReference type="ChEBI" id="CHEBI:58702"/>
    </ligand>
</feature>
<feature type="binding site" evidence="1">
    <location>
        <position position="124"/>
    </location>
    <ligand>
        <name>phosphoenolpyruvate</name>
        <dbReference type="ChEBI" id="CHEBI:58702"/>
    </ligand>
</feature>
<feature type="binding site" evidence="1">
    <location>
        <position position="169"/>
    </location>
    <ligand>
        <name>3-phosphoshikimate</name>
        <dbReference type="ChEBI" id="CHEBI:145989"/>
    </ligand>
</feature>
<feature type="binding site" evidence="1">
    <location>
        <position position="171"/>
    </location>
    <ligand>
        <name>3-phosphoshikimate</name>
        <dbReference type="ChEBI" id="CHEBI:145989"/>
    </ligand>
</feature>
<feature type="binding site" evidence="1">
    <location>
        <position position="171"/>
    </location>
    <ligand>
        <name>phosphoenolpyruvate</name>
        <dbReference type="ChEBI" id="CHEBI:58702"/>
    </ligand>
</feature>
<feature type="binding site" evidence="1">
    <location>
        <position position="195"/>
    </location>
    <ligand>
        <name>3-phosphoshikimate</name>
        <dbReference type="ChEBI" id="CHEBI:145989"/>
    </ligand>
</feature>
<feature type="binding site" evidence="1">
    <location>
        <position position="319"/>
    </location>
    <ligand>
        <name>3-phosphoshikimate</name>
        <dbReference type="ChEBI" id="CHEBI:145989"/>
    </ligand>
</feature>
<feature type="binding site" evidence="1">
    <location>
        <position position="346"/>
    </location>
    <ligand>
        <name>3-phosphoshikimate</name>
        <dbReference type="ChEBI" id="CHEBI:145989"/>
    </ligand>
</feature>
<feature type="binding site" evidence="1">
    <location>
        <position position="350"/>
    </location>
    <ligand>
        <name>phosphoenolpyruvate</name>
        <dbReference type="ChEBI" id="CHEBI:58702"/>
    </ligand>
</feature>
<feature type="binding site" evidence="1">
    <location>
        <position position="394"/>
    </location>
    <ligand>
        <name>phosphoenolpyruvate</name>
        <dbReference type="ChEBI" id="CHEBI:58702"/>
    </ligand>
</feature>
<organism>
    <name type="scientific">Chlorobaculum tepidum (strain ATCC 49652 / DSM 12025 / NBRC 103806 / TLS)</name>
    <name type="common">Chlorobium tepidum</name>
    <dbReference type="NCBI Taxonomy" id="194439"/>
    <lineage>
        <taxon>Bacteria</taxon>
        <taxon>Pseudomonadati</taxon>
        <taxon>Chlorobiota</taxon>
        <taxon>Chlorobiia</taxon>
        <taxon>Chlorobiales</taxon>
        <taxon>Chlorobiaceae</taxon>
        <taxon>Chlorobaculum</taxon>
    </lineage>
</organism>
<keyword id="KW-0028">Amino-acid biosynthesis</keyword>
<keyword id="KW-0057">Aromatic amino acid biosynthesis</keyword>
<keyword id="KW-0963">Cytoplasm</keyword>
<keyword id="KW-1185">Reference proteome</keyword>
<keyword id="KW-0808">Transferase</keyword>
<reference key="1">
    <citation type="journal article" date="2002" name="Proc. Natl. Acad. Sci. U.S.A.">
        <title>The complete genome sequence of Chlorobium tepidum TLS, a photosynthetic, anaerobic, green-sulfur bacterium.</title>
        <authorList>
            <person name="Eisen J.A."/>
            <person name="Nelson K.E."/>
            <person name="Paulsen I.T."/>
            <person name="Heidelberg J.F."/>
            <person name="Wu M."/>
            <person name="Dodson R.J."/>
            <person name="DeBoy R.T."/>
            <person name="Gwinn M.L."/>
            <person name="Nelson W.C."/>
            <person name="Haft D.H."/>
            <person name="Hickey E.K."/>
            <person name="Peterson J.D."/>
            <person name="Durkin A.S."/>
            <person name="Kolonay J.F."/>
            <person name="Yang F."/>
            <person name="Holt I.E."/>
            <person name="Umayam L.A."/>
            <person name="Mason T.M."/>
            <person name="Brenner M."/>
            <person name="Shea T.P."/>
            <person name="Parksey D.S."/>
            <person name="Nierman W.C."/>
            <person name="Feldblyum T.V."/>
            <person name="Hansen C.L."/>
            <person name="Craven M.B."/>
            <person name="Radune D."/>
            <person name="Vamathevan J.J."/>
            <person name="Khouri H.M."/>
            <person name="White O."/>
            <person name="Gruber T.M."/>
            <person name="Ketchum K.A."/>
            <person name="Venter J.C."/>
            <person name="Tettelin H."/>
            <person name="Bryant D.A."/>
            <person name="Fraser C.M."/>
        </authorList>
    </citation>
    <scope>NUCLEOTIDE SEQUENCE [LARGE SCALE GENOMIC DNA]</scope>
    <source>
        <strain>ATCC 49652 / DSM 12025 / NBRC 103806 / TLS</strain>
    </source>
</reference>
<protein>
    <recommendedName>
        <fullName evidence="1">3-phosphoshikimate 1-carboxyvinyltransferase</fullName>
        <ecNumber evidence="1">2.5.1.19</ecNumber>
    </recommendedName>
    <alternativeName>
        <fullName evidence="1">5-enolpyruvylshikimate-3-phosphate synthase</fullName>
        <shortName evidence="1">EPSP synthase</shortName>
        <shortName evidence="1">EPSPS</shortName>
    </alternativeName>
</protein>
<gene>
    <name evidence="1" type="primary">aroA</name>
    <name type="ordered locus">CT1918</name>
</gene>
<comment type="function">
    <text evidence="1">Catalyzes the transfer of the enolpyruvyl moiety of phosphoenolpyruvate (PEP) to the 5-hydroxyl of shikimate-3-phosphate (S3P) to produce enolpyruvyl shikimate-3-phosphate and inorganic phosphate.</text>
</comment>
<comment type="catalytic activity">
    <reaction evidence="1">
        <text>3-phosphoshikimate + phosphoenolpyruvate = 5-O-(1-carboxyvinyl)-3-phosphoshikimate + phosphate</text>
        <dbReference type="Rhea" id="RHEA:21256"/>
        <dbReference type="ChEBI" id="CHEBI:43474"/>
        <dbReference type="ChEBI" id="CHEBI:57701"/>
        <dbReference type="ChEBI" id="CHEBI:58702"/>
        <dbReference type="ChEBI" id="CHEBI:145989"/>
        <dbReference type="EC" id="2.5.1.19"/>
    </reaction>
    <physiologicalReaction direction="left-to-right" evidence="1">
        <dbReference type="Rhea" id="RHEA:21257"/>
    </physiologicalReaction>
</comment>
<comment type="pathway">
    <text evidence="1">Metabolic intermediate biosynthesis; chorismate biosynthesis; chorismate from D-erythrose 4-phosphate and phosphoenolpyruvate: step 6/7.</text>
</comment>
<comment type="subunit">
    <text evidence="1">Monomer.</text>
</comment>
<comment type="subcellular location">
    <subcellularLocation>
        <location evidence="1">Cytoplasm</location>
    </subcellularLocation>
</comment>
<comment type="similarity">
    <text evidence="1">Belongs to the EPSP synthase family.</text>
</comment>
<sequence>MSTFQGEVTTLPPDKSISHRAALIGALAEGTTEISNFSGGYDNQSTLSVLRDAGISIRQEELSAGDGRIERRVVIESNGLWSFREPSVPLMCNNSGSTMRMMAGIMAAQPFRSELVGDASLMKRPMKRVADPLRQMGAEISLSDAGTAPVVIHGTKALKTIEYRLPVPSAQVKSLVAFAALHADGQSKIIEPIRSRDHTELMLGLATIDRPDGVREIIIDGRKPIAAKPFKVPADPSAACFMIALGLLGERSEIVLRNVCLNPTRVAYIDVLQEAGAGLGIENVRSEGGEPVGDIVVRSCSGLKPLRISDHGVVAGVIDEVPMLAVLSAFASGEFELHNAAELRTKESDRIDALVVNLQRLGFECEQYADGFVVKGRKTVASEEVEIECFDDHRIAMSFTIAAEAAGASLRLSDRDVAGVSFPNFFALIDSLRQ</sequence>
<accession>Q8KB71</accession>
<dbReference type="EC" id="2.5.1.19" evidence="1"/>
<dbReference type="EMBL" id="AE006470">
    <property type="protein sequence ID" value="AAM73137.1"/>
    <property type="molecule type" value="Genomic_DNA"/>
</dbReference>
<dbReference type="RefSeq" id="NP_662795.1">
    <property type="nucleotide sequence ID" value="NC_002932.3"/>
</dbReference>
<dbReference type="RefSeq" id="WP_010933576.1">
    <property type="nucleotide sequence ID" value="NC_002932.3"/>
</dbReference>
<dbReference type="SMR" id="Q8KB71"/>
<dbReference type="STRING" id="194439.CT1918"/>
<dbReference type="EnsemblBacteria" id="AAM73137">
    <property type="protein sequence ID" value="AAM73137"/>
    <property type="gene ID" value="CT1918"/>
</dbReference>
<dbReference type="KEGG" id="cte:CT1918"/>
<dbReference type="PATRIC" id="fig|194439.7.peg.1737"/>
<dbReference type="eggNOG" id="COG0128">
    <property type="taxonomic scope" value="Bacteria"/>
</dbReference>
<dbReference type="HOGENOM" id="CLU_024321_0_1_10"/>
<dbReference type="OrthoDB" id="9809920at2"/>
<dbReference type="UniPathway" id="UPA00053">
    <property type="reaction ID" value="UER00089"/>
</dbReference>
<dbReference type="Proteomes" id="UP000001007">
    <property type="component" value="Chromosome"/>
</dbReference>
<dbReference type="GO" id="GO:0005737">
    <property type="term" value="C:cytoplasm"/>
    <property type="evidence" value="ECO:0007669"/>
    <property type="project" value="UniProtKB-SubCell"/>
</dbReference>
<dbReference type="GO" id="GO:0003866">
    <property type="term" value="F:3-phosphoshikimate 1-carboxyvinyltransferase activity"/>
    <property type="evidence" value="ECO:0007669"/>
    <property type="project" value="UniProtKB-UniRule"/>
</dbReference>
<dbReference type="GO" id="GO:0008652">
    <property type="term" value="P:amino acid biosynthetic process"/>
    <property type="evidence" value="ECO:0007669"/>
    <property type="project" value="UniProtKB-KW"/>
</dbReference>
<dbReference type="GO" id="GO:0009073">
    <property type="term" value="P:aromatic amino acid family biosynthetic process"/>
    <property type="evidence" value="ECO:0007669"/>
    <property type="project" value="UniProtKB-KW"/>
</dbReference>
<dbReference type="GO" id="GO:0009423">
    <property type="term" value="P:chorismate biosynthetic process"/>
    <property type="evidence" value="ECO:0007669"/>
    <property type="project" value="UniProtKB-UniRule"/>
</dbReference>
<dbReference type="CDD" id="cd01556">
    <property type="entry name" value="EPSP_synthase"/>
    <property type="match status" value="1"/>
</dbReference>
<dbReference type="FunFam" id="3.65.10.10:FF:000005">
    <property type="entry name" value="3-phosphoshikimate 1-carboxyvinyltransferase"/>
    <property type="match status" value="1"/>
</dbReference>
<dbReference type="Gene3D" id="3.65.10.10">
    <property type="entry name" value="Enolpyruvate transferase domain"/>
    <property type="match status" value="2"/>
</dbReference>
<dbReference type="HAMAP" id="MF_00210">
    <property type="entry name" value="EPSP_synth"/>
    <property type="match status" value="1"/>
</dbReference>
<dbReference type="InterPro" id="IPR001986">
    <property type="entry name" value="Enolpyruvate_Tfrase_dom"/>
</dbReference>
<dbReference type="InterPro" id="IPR036968">
    <property type="entry name" value="Enolpyruvate_Tfrase_sf"/>
</dbReference>
<dbReference type="InterPro" id="IPR006264">
    <property type="entry name" value="EPSP_synthase"/>
</dbReference>
<dbReference type="InterPro" id="IPR023193">
    <property type="entry name" value="EPSP_synthase_CS"/>
</dbReference>
<dbReference type="InterPro" id="IPR013792">
    <property type="entry name" value="RNA3'P_cycl/enolpyr_Trfase_a/b"/>
</dbReference>
<dbReference type="NCBIfam" id="TIGR01356">
    <property type="entry name" value="aroA"/>
    <property type="match status" value="1"/>
</dbReference>
<dbReference type="PANTHER" id="PTHR21090">
    <property type="entry name" value="AROM/DEHYDROQUINATE SYNTHASE"/>
    <property type="match status" value="1"/>
</dbReference>
<dbReference type="PANTHER" id="PTHR21090:SF5">
    <property type="entry name" value="PENTAFUNCTIONAL AROM POLYPEPTIDE"/>
    <property type="match status" value="1"/>
</dbReference>
<dbReference type="Pfam" id="PF00275">
    <property type="entry name" value="EPSP_synthase"/>
    <property type="match status" value="1"/>
</dbReference>
<dbReference type="PIRSF" id="PIRSF000505">
    <property type="entry name" value="EPSPS"/>
    <property type="match status" value="1"/>
</dbReference>
<dbReference type="SUPFAM" id="SSF55205">
    <property type="entry name" value="EPT/RTPC-like"/>
    <property type="match status" value="1"/>
</dbReference>
<dbReference type="PROSITE" id="PS00885">
    <property type="entry name" value="EPSP_SYNTHASE_2"/>
    <property type="match status" value="1"/>
</dbReference>
<name>AROA_CHLTE</name>
<evidence type="ECO:0000255" key="1">
    <source>
        <dbReference type="HAMAP-Rule" id="MF_00210"/>
    </source>
</evidence>